<accession>Q5AW89</accession>
<accession>C8VBB5</accession>
<gene>
    <name type="primary">arp4</name>
    <name type="ORF">AN7441</name>
</gene>
<sequence>MNASVPPSAAEYGGDEVSAIVLDPGFSTTRAGFAGEDTPKSLVPTYYGKYSFEGQEKLIFGDDVFVTPRPSLSVGNPMGRDGVVEDWDMAEKLWEYSFTSRLTGAKPSNPLHNGLNDLVEGELPTEMEGVETNEKPLADSPLLMSECSWNPTKAREKTIEIAMEKWGTPAFYLARNGVLASFAAGKASALVVDIGASNISVTPVHDGMVLKRGVQHSPLGGDYISSQIRALFKTNTPQPITITPHYLISSKTAVEAGQPPQAKYKTFPPEKAPDASYRSLLEERTLTEFKECVVQVWPGPTKLSAPGPNGVPNEEMARSTPGRPFEFPDGYNQVFGVDRYRVVESLFDAKATILDPDSQFPAPTPAQTIPELIKAALNGVDVDLRPHLLANVVVTGASSLLYGFTDRLNQELMQLYPGPRVRISAPGNTSERRFSSWIGGSILASLGTFHQMWISKKEFDEHGPNIVEKRCK</sequence>
<name>ARP4_EMENI</name>
<keyword id="KW-0010">Activator</keyword>
<keyword id="KW-0156">Chromatin regulator</keyword>
<keyword id="KW-0227">DNA damage</keyword>
<keyword id="KW-0234">DNA repair</keyword>
<keyword id="KW-0539">Nucleus</keyword>
<keyword id="KW-1185">Reference proteome</keyword>
<keyword id="KW-0804">Transcription</keyword>
<keyword id="KW-0805">Transcription regulation</keyword>
<evidence type="ECO:0000250" key="1"/>
<evidence type="ECO:0000305" key="2"/>
<proteinExistence type="inferred from homology"/>
<organism>
    <name type="scientific">Emericella nidulans (strain FGSC A4 / ATCC 38163 / CBS 112.46 / NRRL 194 / M139)</name>
    <name type="common">Aspergillus nidulans</name>
    <dbReference type="NCBI Taxonomy" id="227321"/>
    <lineage>
        <taxon>Eukaryota</taxon>
        <taxon>Fungi</taxon>
        <taxon>Dikarya</taxon>
        <taxon>Ascomycota</taxon>
        <taxon>Pezizomycotina</taxon>
        <taxon>Eurotiomycetes</taxon>
        <taxon>Eurotiomycetidae</taxon>
        <taxon>Eurotiales</taxon>
        <taxon>Aspergillaceae</taxon>
        <taxon>Aspergillus</taxon>
        <taxon>Aspergillus subgen. Nidulantes</taxon>
    </lineage>
</organism>
<dbReference type="EMBL" id="AACD01000129">
    <property type="protein sequence ID" value="EAA62021.1"/>
    <property type="molecule type" value="Genomic_DNA"/>
</dbReference>
<dbReference type="EMBL" id="BN001304">
    <property type="protein sequence ID" value="CBF79387.1"/>
    <property type="molecule type" value="Genomic_DNA"/>
</dbReference>
<dbReference type="RefSeq" id="XP_680710.1">
    <property type="nucleotide sequence ID" value="XM_675618.1"/>
</dbReference>
<dbReference type="SMR" id="Q5AW89"/>
<dbReference type="FunCoup" id="Q5AW89">
    <property type="interactions" value="286"/>
</dbReference>
<dbReference type="STRING" id="227321.Q5AW89"/>
<dbReference type="EnsemblFungi" id="CBF79387">
    <property type="protein sequence ID" value="CBF79387"/>
    <property type="gene ID" value="ANIA_07441"/>
</dbReference>
<dbReference type="KEGG" id="ani:ANIA_07441"/>
<dbReference type="VEuPathDB" id="FungiDB:AN7441"/>
<dbReference type="eggNOG" id="KOG0679">
    <property type="taxonomic scope" value="Eukaryota"/>
</dbReference>
<dbReference type="HOGENOM" id="CLU_027965_6_2_1"/>
<dbReference type="InParanoid" id="Q5AW89"/>
<dbReference type="OMA" id="MTEAPWN"/>
<dbReference type="OrthoDB" id="5132116at2759"/>
<dbReference type="Proteomes" id="UP000000560">
    <property type="component" value="Chromosome IV"/>
</dbReference>
<dbReference type="GO" id="GO:0035267">
    <property type="term" value="C:NuA4 histone acetyltransferase complex"/>
    <property type="evidence" value="ECO:0000318"/>
    <property type="project" value="GO_Central"/>
</dbReference>
<dbReference type="GO" id="GO:0016514">
    <property type="term" value="C:SWI/SNF complex"/>
    <property type="evidence" value="ECO:0000318"/>
    <property type="project" value="GO_Central"/>
</dbReference>
<dbReference type="GO" id="GO:0003682">
    <property type="term" value="F:chromatin binding"/>
    <property type="evidence" value="ECO:0000318"/>
    <property type="project" value="GO_Central"/>
</dbReference>
<dbReference type="GO" id="GO:0006338">
    <property type="term" value="P:chromatin remodeling"/>
    <property type="evidence" value="ECO:0000318"/>
    <property type="project" value="GO_Central"/>
</dbReference>
<dbReference type="GO" id="GO:0006281">
    <property type="term" value="P:DNA repair"/>
    <property type="evidence" value="ECO:0007669"/>
    <property type="project" value="UniProtKB-KW"/>
</dbReference>
<dbReference type="GO" id="GO:0006357">
    <property type="term" value="P:regulation of transcription by RNA polymerase II"/>
    <property type="evidence" value="ECO:0000318"/>
    <property type="project" value="GO_Central"/>
</dbReference>
<dbReference type="CDD" id="cd13395">
    <property type="entry name" value="ASKHA_NBD_Arp4_ACTL6-like"/>
    <property type="match status" value="1"/>
</dbReference>
<dbReference type="FunFam" id="3.30.420.40:FF:000175">
    <property type="entry name" value="Chromatin remodeling and histone acetyltransferase complexes subunit"/>
    <property type="match status" value="1"/>
</dbReference>
<dbReference type="FunFam" id="3.90.640.10:FF:000063">
    <property type="entry name" value="Chromatin remodeling and histone acetyltransferase complexes subunit putative"/>
    <property type="match status" value="1"/>
</dbReference>
<dbReference type="FunFam" id="3.30.420.40:FF:000224">
    <property type="entry name" value="NuA4 histone acetyltransferase subunit"/>
    <property type="match status" value="1"/>
</dbReference>
<dbReference type="Gene3D" id="3.30.420.40">
    <property type="match status" value="4"/>
</dbReference>
<dbReference type="Gene3D" id="3.90.640.10">
    <property type="entry name" value="Actin, Chain A, domain 4"/>
    <property type="match status" value="2"/>
</dbReference>
<dbReference type="InterPro" id="IPR004000">
    <property type="entry name" value="Actin"/>
</dbReference>
<dbReference type="InterPro" id="IPR043129">
    <property type="entry name" value="ATPase_NBD"/>
</dbReference>
<dbReference type="PANTHER" id="PTHR11937">
    <property type="entry name" value="ACTIN"/>
    <property type="match status" value="1"/>
</dbReference>
<dbReference type="Pfam" id="PF00022">
    <property type="entry name" value="Actin"/>
    <property type="match status" value="1"/>
</dbReference>
<dbReference type="SMART" id="SM00268">
    <property type="entry name" value="ACTIN"/>
    <property type="match status" value="1"/>
</dbReference>
<dbReference type="SUPFAM" id="SSF53067">
    <property type="entry name" value="Actin-like ATPase domain"/>
    <property type="match status" value="2"/>
</dbReference>
<reference key="1">
    <citation type="journal article" date="2005" name="Nature">
        <title>Sequencing of Aspergillus nidulans and comparative analysis with A. fumigatus and A. oryzae.</title>
        <authorList>
            <person name="Galagan J.E."/>
            <person name="Calvo S.E."/>
            <person name="Cuomo C."/>
            <person name="Ma L.-J."/>
            <person name="Wortman J.R."/>
            <person name="Batzoglou S."/>
            <person name="Lee S.-I."/>
            <person name="Bastuerkmen M."/>
            <person name="Spevak C.C."/>
            <person name="Clutterbuck J."/>
            <person name="Kapitonov V."/>
            <person name="Jurka J."/>
            <person name="Scazzocchio C."/>
            <person name="Farman M.L."/>
            <person name="Butler J."/>
            <person name="Purcell S."/>
            <person name="Harris S."/>
            <person name="Braus G.H."/>
            <person name="Draht O."/>
            <person name="Busch S."/>
            <person name="D'Enfert C."/>
            <person name="Bouchier C."/>
            <person name="Goldman G.H."/>
            <person name="Bell-Pedersen D."/>
            <person name="Griffiths-Jones S."/>
            <person name="Doonan J.H."/>
            <person name="Yu J."/>
            <person name="Vienken K."/>
            <person name="Pain A."/>
            <person name="Freitag M."/>
            <person name="Selker E.U."/>
            <person name="Archer D.B."/>
            <person name="Penalva M.A."/>
            <person name="Oakley B.R."/>
            <person name="Momany M."/>
            <person name="Tanaka T."/>
            <person name="Kumagai T."/>
            <person name="Asai K."/>
            <person name="Machida M."/>
            <person name="Nierman W.C."/>
            <person name="Denning D.W."/>
            <person name="Caddick M.X."/>
            <person name="Hynes M."/>
            <person name="Paoletti M."/>
            <person name="Fischer R."/>
            <person name="Miller B.L."/>
            <person name="Dyer P.S."/>
            <person name="Sachs M.S."/>
            <person name="Osmani S.A."/>
            <person name="Birren B.W."/>
        </authorList>
    </citation>
    <scope>NUCLEOTIDE SEQUENCE [LARGE SCALE GENOMIC DNA]</scope>
    <source>
        <strain>FGSC A4 / ATCC 38163 / CBS 112.46 / NRRL 194 / M139</strain>
    </source>
</reference>
<reference key="2">
    <citation type="journal article" date="2009" name="Fungal Genet. Biol.">
        <title>The 2008 update of the Aspergillus nidulans genome annotation: a community effort.</title>
        <authorList>
            <person name="Wortman J.R."/>
            <person name="Gilsenan J.M."/>
            <person name="Joardar V."/>
            <person name="Deegan J."/>
            <person name="Clutterbuck J."/>
            <person name="Andersen M.R."/>
            <person name="Archer D."/>
            <person name="Bencina M."/>
            <person name="Braus G."/>
            <person name="Coutinho P."/>
            <person name="von Dohren H."/>
            <person name="Doonan J."/>
            <person name="Driessen A.J."/>
            <person name="Durek P."/>
            <person name="Espeso E."/>
            <person name="Fekete E."/>
            <person name="Flipphi M."/>
            <person name="Estrada C.G."/>
            <person name="Geysens S."/>
            <person name="Goldman G."/>
            <person name="de Groot P.W."/>
            <person name="Hansen K."/>
            <person name="Harris S.D."/>
            <person name="Heinekamp T."/>
            <person name="Helmstaedt K."/>
            <person name="Henrissat B."/>
            <person name="Hofmann G."/>
            <person name="Homan T."/>
            <person name="Horio T."/>
            <person name="Horiuchi H."/>
            <person name="James S."/>
            <person name="Jones M."/>
            <person name="Karaffa L."/>
            <person name="Karanyi Z."/>
            <person name="Kato M."/>
            <person name="Keller N."/>
            <person name="Kelly D.E."/>
            <person name="Kiel J.A."/>
            <person name="Kim J.M."/>
            <person name="van der Klei I.J."/>
            <person name="Klis F.M."/>
            <person name="Kovalchuk A."/>
            <person name="Krasevec N."/>
            <person name="Kubicek C.P."/>
            <person name="Liu B."/>
            <person name="Maccabe A."/>
            <person name="Meyer V."/>
            <person name="Mirabito P."/>
            <person name="Miskei M."/>
            <person name="Mos M."/>
            <person name="Mullins J."/>
            <person name="Nelson D.R."/>
            <person name="Nielsen J."/>
            <person name="Oakley B.R."/>
            <person name="Osmani S.A."/>
            <person name="Pakula T."/>
            <person name="Paszewski A."/>
            <person name="Paulsen I."/>
            <person name="Pilsyk S."/>
            <person name="Pocsi I."/>
            <person name="Punt P.J."/>
            <person name="Ram A.F."/>
            <person name="Ren Q."/>
            <person name="Robellet X."/>
            <person name="Robson G."/>
            <person name="Seiboth B."/>
            <person name="van Solingen P."/>
            <person name="Specht T."/>
            <person name="Sun J."/>
            <person name="Taheri-Talesh N."/>
            <person name="Takeshita N."/>
            <person name="Ussery D."/>
            <person name="vanKuyk P.A."/>
            <person name="Visser H."/>
            <person name="van de Vondervoort P.J."/>
            <person name="de Vries R.P."/>
            <person name="Walton J."/>
            <person name="Xiang X."/>
            <person name="Xiong Y."/>
            <person name="Zeng A.P."/>
            <person name="Brandt B.W."/>
            <person name="Cornell M.J."/>
            <person name="van den Hondel C.A."/>
            <person name="Visser J."/>
            <person name="Oliver S.G."/>
            <person name="Turner G."/>
        </authorList>
    </citation>
    <scope>GENOME REANNOTATION</scope>
    <source>
        <strain>FGSC A4 / ATCC 38163 / CBS 112.46 / NRRL 194 / M139</strain>
    </source>
</reference>
<protein>
    <recommendedName>
        <fullName>Actin-related protein 4</fullName>
    </recommendedName>
    <alternativeName>
        <fullName>Actin-like protein arp4</fullName>
        <shortName>Actin-like protein 4</shortName>
    </alternativeName>
</protein>
<feature type="chain" id="PRO_0000089096" description="Actin-related protein 4">
    <location>
        <begin position="1"/>
        <end position="472"/>
    </location>
</feature>
<comment type="function">
    <text evidence="1">Chromatin interaction component of the NuA4 histone acetyltransferase complex which is involved in transcriptional activation of selected genes principally by acetylation of nucleosomal histone H4 and H2A. The NuA4 complex is also involved in DNA repair. Is required for NuA4 complex integrity. Component of the SWR1 complex which mediates the ATP-dependent exchange of histone H2A for the H2A variant HZT1 leading to transcriptional regulation of selected genes by chromatin remodeling. Component of the INO80 complex which remodels chromatin by shifting nucleosomes and is involved in DNA repair (By similarity).</text>
</comment>
<comment type="subunit">
    <text evidence="1">Component of the NuA4 histone acetyltransferase complex, of the INO80 chromatin remodeling complex, and of the SWR1 chromatin remodeling complex.</text>
</comment>
<comment type="subcellular location">
    <subcellularLocation>
        <location evidence="1">Nucleus</location>
    </subcellularLocation>
</comment>
<comment type="similarity">
    <text evidence="2">Belongs to the actin family. ARP4 subfamily.</text>
</comment>